<evidence type="ECO:0000255" key="1">
    <source>
        <dbReference type="HAMAP-Rule" id="MF_00017"/>
    </source>
</evidence>
<dbReference type="EMBL" id="FM242711">
    <property type="protein sequence ID" value="CAS06430.1"/>
    <property type="molecule type" value="Genomic_DNA"/>
</dbReference>
<dbReference type="RefSeq" id="WP_003722062.1">
    <property type="nucleotide sequence ID" value="NC_012488.1"/>
</dbReference>
<dbReference type="SMR" id="C1KZQ7"/>
<dbReference type="GeneID" id="93240591"/>
<dbReference type="KEGG" id="lmc:Lm4b_02676"/>
<dbReference type="HOGENOM" id="CLU_060739_1_0_9"/>
<dbReference type="GO" id="GO:0003677">
    <property type="term" value="F:DNA binding"/>
    <property type="evidence" value="ECO:0007669"/>
    <property type="project" value="UniProtKB-UniRule"/>
</dbReference>
<dbReference type="GO" id="GO:0008270">
    <property type="term" value="F:zinc ion binding"/>
    <property type="evidence" value="ECO:0007669"/>
    <property type="project" value="UniProtKB-KW"/>
</dbReference>
<dbReference type="GO" id="GO:0006310">
    <property type="term" value="P:DNA recombination"/>
    <property type="evidence" value="ECO:0007669"/>
    <property type="project" value="UniProtKB-UniRule"/>
</dbReference>
<dbReference type="GO" id="GO:0006281">
    <property type="term" value="P:DNA repair"/>
    <property type="evidence" value="ECO:0007669"/>
    <property type="project" value="UniProtKB-UniRule"/>
</dbReference>
<dbReference type="CDD" id="cd01025">
    <property type="entry name" value="TOPRIM_recR"/>
    <property type="match status" value="1"/>
</dbReference>
<dbReference type="Gene3D" id="3.30.60.80">
    <property type="match status" value="1"/>
</dbReference>
<dbReference type="Gene3D" id="3.40.1360.10">
    <property type="match status" value="1"/>
</dbReference>
<dbReference type="Gene3D" id="6.10.250.240">
    <property type="match status" value="1"/>
</dbReference>
<dbReference type="Gene3D" id="1.10.8.420">
    <property type="entry name" value="RecR Domain 1"/>
    <property type="match status" value="1"/>
</dbReference>
<dbReference type="HAMAP" id="MF_00017">
    <property type="entry name" value="RecR"/>
    <property type="match status" value="1"/>
</dbReference>
<dbReference type="InterPro" id="IPR000093">
    <property type="entry name" value="DNA_Rcmb_RecR"/>
</dbReference>
<dbReference type="InterPro" id="IPR023627">
    <property type="entry name" value="Rcmb_RecR"/>
</dbReference>
<dbReference type="InterPro" id="IPR015967">
    <property type="entry name" value="Rcmb_RecR_Znf"/>
</dbReference>
<dbReference type="InterPro" id="IPR006171">
    <property type="entry name" value="TOPRIM_dom"/>
</dbReference>
<dbReference type="InterPro" id="IPR034137">
    <property type="entry name" value="TOPRIM_RecR"/>
</dbReference>
<dbReference type="NCBIfam" id="TIGR00615">
    <property type="entry name" value="recR"/>
    <property type="match status" value="1"/>
</dbReference>
<dbReference type="PANTHER" id="PTHR30446">
    <property type="entry name" value="RECOMBINATION PROTEIN RECR"/>
    <property type="match status" value="1"/>
</dbReference>
<dbReference type="PANTHER" id="PTHR30446:SF0">
    <property type="entry name" value="RECOMBINATION PROTEIN RECR"/>
    <property type="match status" value="1"/>
</dbReference>
<dbReference type="Pfam" id="PF21175">
    <property type="entry name" value="RecR_C"/>
    <property type="match status" value="1"/>
</dbReference>
<dbReference type="Pfam" id="PF21176">
    <property type="entry name" value="RecR_HhH"/>
    <property type="match status" value="1"/>
</dbReference>
<dbReference type="Pfam" id="PF02132">
    <property type="entry name" value="RecR_ZnF"/>
    <property type="match status" value="1"/>
</dbReference>
<dbReference type="Pfam" id="PF13662">
    <property type="entry name" value="Toprim_4"/>
    <property type="match status" value="1"/>
</dbReference>
<dbReference type="SMART" id="SM00493">
    <property type="entry name" value="TOPRIM"/>
    <property type="match status" value="1"/>
</dbReference>
<dbReference type="SUPFAM" id="SSF111304">
    <property type="entry name" value="Recombination protein RecR"/>
    <property type="match status" value="1"/>
</dbReference>
<dbReference type="PROSITE" id="PS01300">
    <property type="entry name" value="RECR"/>
    <property type="match status" value="1"/>
</dbReference>
<dbReference type="PROSITE" id="PS50880">
    <property type="entry name" value="TOPRIM"/>
    <property type="match status" value="1"/>
</dbReference>
<keyword id="KW-0227">DNA damage</keyword>
<keyword id="KW-0233">DNA recombination</keyword>
<keyword id="KW-0234">DNA repair</keyword>
<keyword id="KW-0479">Metal-binding</keyword>
<keyword id="KW-0862">Zinc</keyword>
<keyword id="KW-0863">Zinc-finger</keyword>
<organism>
    <name type="scientific">Listeria monocytogenes serotype 4b (strain CLIP80459)</name>
    <dbReference type="NCBI Taxonomy" id="568819"/>
    <lineage>
        <taxon>Bacteria</taxon>
        <taxon>Bacillati</taxon>
        <taxon>Bacillota</taxon>
        <taxon>Bacilli</taxon>
        <taxon>Bacillales</taxon>
        <taxon>Listeriaceae</taxon>
        <taxon>Listeria</taxon>
    </lineage>
</organism>
<name>RECR_LISMC</name>
<gene>
    <name evidence="1" type="primary">recR</name>
    <name type="ordered locus">Lm4b_02676</name>
</gene>
<reference key="1">
    <citation type="journal article" date="2012" name="BMC Genomics">
        <title>Comparative genomics and transcriptomics of lineages I, II, and III strains of Listeria monocytogenes.</title>
        <authorList>
            <person name="Hain T."/>
            <person name="Ghai R."/>
            <person name="Billion A."/>
            <person name="Kuenne C.T."/>
            <person name="Steinweg C."/>
            <person name="Izar B."/>
            <person name="Mohamed W."/>
            <person name="Mraheil M."/>
            <person name="Domann E."/>
            <person name="Schaffrath S."/>
            <person name="Karst U."/>
            <person name="Goesmann A."/>
            <person name="Oehm S."/>
            <person name="Puhler A."/>
            <person name="Merkl R."/>
            <person name="Vorwerk S."/>
            <person name="Glaser P."/>
            <person name="Garrido P."/>
            <person name="Rusniok C."/>
            <person name="Buchrieser C."/>
            <person name="Goebel W."/>
            <person name="Chakraborty T."/>
        </authorList>
    </citation>
    <scope>NUCLEOTIDE SEQUENCE [LARGE SCALE GENOMIC DNA]</scope>
    <source>
        <strain>CLIP80459</strain>
    </source>
</reference>
<protein>
    <recommendedName>
        <fullName evidence="1">Recombination protein RecR</fullName>
    </recommendedName>
</protein>
<accession>C1KZQ7</accession>
<sequence length="198" mass="21934">MHYPEPITKLIDSFMKLPGIGPKSAARLAFYVLDMKEDDVLDFAKALVDAKRNLSFCSVCGHITDKDPCYICADTSRDRSVICVVQESKDVIAMEKMRDFHGLYHVLHGTISPMDGIGPEDINIPDLLKRLQDDTIEEVILATNPNVEGEATAMYISRLLKPSGIKVTRIAHGLPVGGDLEYADEVTLSKAMEGRREV</sequence>
<proteinExistence type="inferred from homology"/>
<feature type="chain" id="PRO_1000201865" description="Recombination protein RecR">
    <location>
        <begin position="1"/>
        <end position="198"/>
    </location>
</feature>
<feature type="domain" description="Toprim" evidence="1">
    <location>
        <begin position="80"/>
        <end position="175"/>
    </location>
</feature>
<feature type="zinc finger region" description="C4-type" evidence="1">
    <location>
        <begin position="57"/>
        <end position="72"/>
    </location>
</feature>
<comment type="function">
    <text evidence="1">May play a role in DNA repair. It seems to be involved in an RecBC-independent recombinational process of DNA repair. It may act with RecF and RecO.</text>
</comment>
<comment type="similarity">
    <text evidence="1">Belongs to the RecR family.</text>
</comment>